<proteinExistence type="inferred from homology"/>
<sequence length="398" mass="41816">MGFIKTLSLSLAAASAANAAKILSPSRPDDVIPNQYIVVMKDGVSGEAFGSHRAWVSDMHHTNLTRRALLNHGIKKTYDFMRMKGYSGVFDRDTIKDISQSPDVAFIEHDHVVRLTELVEQPDAPTWGLGRVSHQEPGNMDYVYDDTAGDGVWAYDIDTGVDIEHPDFEGRAVWGSNHVDDDDTDGNGHGTHVGGTIGSLTYGVAKKVRIIAVKVLDARGSGSNSGVIAGIDWSVNHAMENNVAERAVINLSLGGARSDTTNMAVANAVQAGLHVAVAAGNDNEDAENSSPASEPTVCTVAASNINDQKASFSNFGSVVDIYAPGEEILSLAPGGGTQTLSGTSMAAPHIAGMGAYLIALENITASAACDRIKELGLEVINNPGAGTTNKLTYNGNGQ</sequence>
<name>SUB7B_COCP7</name>
<protein>
    <recommendedName>
        <fullName>Subtilisin-like protease CPC735_015300</fullName>
        <ecNumber>3.4.21.-</ecNumber>
    </recommendedName>
</protein>
<organism>
    <name type="scientific">Coccidioides posadasii (strain C735)</name>
    <name type="common">Valley fever fungus</name>
    <dbReference type="NCBI Taxonomy" id="222929"/>
    <lineage>
        <taxon>Eukaryota</taxon>
        <taxon>Fungi</taxon>
        <taxon>Dikarya</taxon>
        <taxon>Ascomycota</taxon>
        <taxon>Pezizomycotina</taxon>
        <taxon>Eurotiomycetes</taxon>
        <taxon>Eurotiomycetidae</taxon>
        <taxon>Onygenales</taxon>
        <taxon>Onygenaceae</taxon>
        <taxon>Coccidioides</taxon>
    </lineage>
</organism>
<evidence type="ECO:0000250" key="1"/>
<evidence type="ECO:0000255" key="2"/>
<evidence type="ECO:0000255" key="3">
    <source>
        <dbReference type="PROSITE-ProRule" id="PRU01240"/>
    </source>
</evidence>
<evidence type="ECO:0000305" key="4"/>
<gene>
    <name type="ORF">CPC735_015300</name>
</gene>
<dbReference type="EC" id="3.4.21.-"/>
<dbReference type="EMBL" id="ACFW01000043">
    <property type="protein sequence ID" value="EER24932.1"/>
    <property type="molecule type" value="Genomic_DNA"/>
</dbReference>
<dbReference type="SMR" id="C5PCX1"/>
<dbReference type="KEGG" id="cpw:9692548"/>
<dbReference type="VEuPathDB" id="FungiDB:CPC735_015300"/>
<dbReference type="HOGENOM" id="CLU_011263_1_3_1"/>
<dbReference type="OrthoDB" id="206201at2759"/>
<dbReference type="Proteomes" id="UP000009084">
    <property type="component" value="Unassembled WGS sequence"/>
</dbReference>
<dbReference type="GO" id="GO:0005576">
    <property type="term" value="C:extracellular region"/>
    <property type="evidence" value="ECO:0007669"/>
    <property type="project" value="UniProtKB-SubCell"/>
</dbReference>
<dbReference type="GO" id="GO:0004252">
    <property type="term" value="F:serine-type endopeptidase activity"/>
    <property type="evidence" value="ECO:0007669"/>
    <property type="project" value="InterPro"/>
</dbReference>
<dbReference type="GO" id="GO:0006508">
    <property type="term" value="P:proteolysis"/>
    <property type="evidence" value="ECO:0007669"/>
    <property type="project" value="UniProtKB-KW"/>
</dbReference>
<dbReference type="CDD" id="cd04077">
    <property type="entry name" value="Peptidases_S8_PCSK9_ProteinaseK_like"/>
    <property type="match status" value="1"/>
</dbReference>
<dbReference type="FunFam" id="3.40.50.200:FF:000014">
    <property type="entry name" value="Proteinase K"/>
    <property type="match status" value="1"/>
</dbReference>
<dbReference type="Gene3D" id="3.30.70.80">
    <property type="entry name" value="Peptidase S8 propeptide/proteinase inhibitor I9"/>
    <property type="match status" value="1"/>
</dbReference>
<dbReference type="Gene3D" id="3.40.50.200">
    <property type="entry name" value="Peptidase S8/S53 domain"/>
    <property type="match status" value="1"/>
</dbReference>
<dbReference type="InterPro" id="IPR034193">
    <property type="entry name" value="PCSK9_ProteinaseK-like"/>
</dbReference>
<dbReference type="InterPro" id="IPR000209">
    <property type="entry name" value="Peptidase_S8/S53_dom"/>
</dbReference>
<dbReference type="InterPro" id="IPR036852">
    <property type="entry name" value="Peptidase_S8/S53_dom_sf"/>
</dbReference>
<dbReference type="InterPro" id="IPR022398">
    <property type="entry name" value="Peptidase_S8_His-AS"/>
</dbReference>
<dbReference type="InterPro" id="IPR023828">
    <property type="entry name" value="Peptidase_S8_Ser-AS"/>
</dbReference>
<dbReference type="InterPro" id="IPR050131">
    <property type="entry name" value="Peptidase_S8_subtilisin-like"/>
</dbReference>
<dbReference type="InterPro" id="IPR015500">
    <property type="entry name" value="Peptidase_S8_subtilisin-rel"/>
</dbReference>
<dbReference type="InterPro" id="IPR010259">
    <property type="entry name" value="S8pro/Inhibitor_I9"/>
</dbReference>
<dbReference type="InterPro" id="IPR037045">
    <property type="entry name" value="S8pro/Inhibitor_I9_sf"/>
</dbReference>
<dbReference type="PANTHER" id="PTHR43806:SF58">
    <property type="entry name" value="ALKALINE PROTEASE 1-RELATED"/>
    <property type="match status" value="1"/>
</dbReference>
<dbReference type="PANTHER" id="PTHR43806">
    <property type="entry name" value="PEPTIDASE S8"/>
    <property type="match status" value="1"/>
</dbReference>
<dbReference type="Pfam" id="PF05922">
    <property type="entry name" value="Inhibitor_I9"/>
    <property type="match status" value="1"/>
</dbReference>
<dbReference type="Pfam" id="PF00082">
    <property type="entry name" value="Peptidase_S8"/>
    <property type="match status" value="1"/>
</dbReference>
<dbReference type="PRINTS" id="PR00723">
    <property type="entry name" value="SUBTILISIN"/>
</dbReference>
<dbReference type="SUPFAM" id="SSF54897">
    <property type="entry name" value="Protease propeptides/inhibitors"/>
    <property type="match status" value="1"/>
</dbReference>
<dbReference type="SUPFAM" id="SSF52743">
    <property type="entry name" value="Subtilisin-like"/>
    <property type="match status" value="1"/>
</dbReference>
<dbReference type="PROSITE" id="PS51892">
    <property type="entry name" value="SUBTILASE"/>
    <property type="match status" value="1"/>
</dbReference>
<dbReference type="PROSITE" id="PS00137">
    <property type="entry name" value="SUBTILASE_HIS"/>
    <property type="match status" value="1"/>
</dbReference>
<dbReference type="PROSITE" id="PS00138">
    <property type="entry name" value="SUBTILASE_SER"/>
    <property type="match status" value="1"/>
</dbReference>
<reference key="1">
    <citation type="journal article" date="2009" name="Genome Res.">
        <title>Comparative genomic analyses of the human fungal pathogens Coccidioides and their relatives.</title>
        <authorList>
            <person name="Sharpton T.J."/>
            <person name="Stajich J.E."/>
            <person name="Rounsley S.D."/>
            <person name="Gardner M.J."/>
            <person name="Wortman J.R."/>
            <person name="Jordar V.S."/>
            <person name="Maiti R."/>
            <person name="Kodira C.D."/>
            <person name="Neafsey D.E."/>
            <person name="Zeng Q."/>
            <person name="Hung C.-Y."/>
            <person name="McMahan C."/>
            <person name="Muszewska A."/>
            <person name="Grynberg M."/>
            <person name="Mandel M.A."/>
            <person name="Kellner E.M."/>
            <person name="Barker B.M."/>
            <person name="Galgiani J.N."/>
            <person name="Orbach M.J."/>
            <person name="Kirkland T.N."/>
            <person name="Cole G.T."/>
            <person name="Henn M.R."/>
            <person name="Birren B.W."/>
            <person name="Taylor J.W."/>
        </authorList>
    </citation>
    <scope>NUCLEOTIDE SEQUENCE [LARGE SCALE GENOMIC DNA]</scope>
    <source>
        <strain>C735</strain>
    </source>
</reference>
<feature type="signal peptide" evidence="2">
    <location>
        <begin position="1"/>
        <end position="19"/>
    </location>
</feature>
<feature type="propeptide" id="PRO_0000407020" evidence="1">
    <location>
        <begin position="20"/>
        <end position="116"/>
    </location>
</feature>
<feature type="chain" id="PRO_0000407021" description="Subtilisin-like protease CPC735_015300">
    <location>
        <begin position="117"/>
        <end position="398"/>
    </location>
</feature>
<feature type="domain" description="Inhibitor I9" evidence="2">
    <location>
        <begin position="35"/>
        <end position="115"/>
    </location>
</feature>
<feature type="domain" description="Peptidase S8" evidence="3">
    <location>
        <begin position="126"/>
        <end position="398"/>
    </location>
</feature>
<feature type="active site" description="Charge relay system" evidence="3">
    <location>
        <position position="158"/>
    </location>
</feature>
<feature type="active site" description="Charge relay system" evidence="3">
    <location>
        <position position="189"/>
    </location>
</feature>
<feature type="active site" description="Charge relay system" evidence="3">
    <location>
        <position position="344"/>
    </location>
</feature>
<feature type="glycosylation site" description="N-linked (GlcNAc...) asparagine" evidence="2">
    <location>
        <position position="250"/>
    </location>
</feature>
<feature type="glycosylation site" description="N-linked (GlcNAc...) asparagine" evidence="2">
    <location>
        <position position="362"/>
    </location>
</feature>
<accession>C5PCX1</accession>
<comment type="function">
    <text evidence="1">Secreted subtilisin-like serine protease with keratinolytic activity that contributes to pathogenicity.</text>
</comment>
<comment type="subcellular location">
    <subcellularLocation>
        <location evidence="1">Secreted</location>
    </subcellularLocation>
</comment>
<comment type="similarity">
    <text evidence="4">Belongs to the peptidase S8 family.</text>
</comment>
<keyword id="KW-0325">Glycoprotein</keyword>
<keyword id="KW-0378">Hydrolase</keyword>
<keyword id="KW-0645">Protease</keyword>
<keyword id="KW-0964">Secreted</keyword>
<keyword id="KW-0720">Serine protease</keyword>
<keyword id="KW-0732">Signal</keyword>
<keyword id="KW-0843">Virulence</keyword>
<keyword id="KW-0865">Zymogen</keyword>